<sequence>MELNRRDFMKANAAIAAAAAAGITIPVKNVQAADDGIRWDKAPCRYCGTGCSVLVGTKDGRVVATQGDPDAEVNRGLNCIKGYFLSKIMYGADRVQQPLLRMKDGKFDKEGDFTPISWEQAFTIMAEKIKDILKKKEPNAIGMFSSGQTTIYEGYAKVKLWKAGLRSNTIDPNARHCMASAAVAFMRTFGMDEPMGCYNDIEKADTFVLWGSNMAEMHPILWSRISDRRLSGDNVKVVVMSTYEHRSFELADTPIIFKPQSDLAILNYIANYIIQNDKVDWDFVNKHTKFKRGETNIGYGLRPEHPLQQGTNAKTAGKMYDSDFEEFKKIVSEYTLDKAHEISGVPKDQLETLAKMYADPEQNLVSYWTMGFNQHTRGVWVNQMMYNVHLLTGKISKPGCGPFSLTGQPSACGTAREVGTFIHRLPADMVVTNPKHVAKAEEIWQLPAGTIPTVPGFHAVAQSRALKDGKLNFLWQMCTNNMQGGPNINEETFPGWRNPENFIVVSDPYPSTSAVAADLILPTCMWVEKEGGYGNAERRTQLWRQQVKGPGESRSDLWQIVEFSKYFKTDEVWSEELLAQKPEYRGKTLYEVLYKNGEVDKFQVPTNIPGYINDEADHFGFYLQKGLFEEYASFGRGHGHDLAPFDVYHQVRGLRWPVVDGKETLWRYREGYDPYVKSGEEVAFYGNPDNKAIILGVPYEAPAESPDEEYDLWLCTGRVLEHWHTGTMTRRVPELHKAFPNNLVWMHPTDAKKRGLRHGDKVKLITRRGEMISHLDTRGRNKTPEGLIFTTFFDAGQLTNKLTLDATDPISFETDYKKCAVKVVKA</sequence>
<name>NAPA_ACTSZ</name>
<dbReference type="EC" id="1.9.6.1" evidence="1"/>
<dbReference type="EMBL" id="CP000746">
    <property type="protein sequence ID" value="ABR75384.1"/>
    <property type="molecule type" value="Genomic_DNA"/>
</dbReference>
<dbReference type="RefSeq" id="WP_012073760.1">
    <property type="nucleotide sequence ID" value="NC_009655.1"/>
</dbReference>
<dbReference type="SMR" id="A6VQY7"/>
<dbReference type="STRING" id="339671.Asuc_2038"/>
<dbReference type="KEGG" id="asu:Asuc_2038"/>
<dbReference type="eggNOG" id="COG0243">
    <property type="taxonomic scope" value="Bacteria"/>
</dbReference>
<dbReference type="HOGENOM" id="CLU_000422_13_4_6"/>
<dbReference type="OrthoDB" id="9816402at2"/>
<dbReference type="Proteomes" id="UP000001114">
    <property type="component" value="Chromosome"/>
</dbReference>
<dbReference type="GO" id="GO:0016020">
    <property type="term" value="C:membrane"/>
    <property type="evidence" value="ECO:0007669"/>
    <property type="project" value="TreeGrafter"/>
</dbReference>
<dbReference type="GO" id="GO:0009325">
    <property type="term" value="C:nitrate reductase complex"/>
    <property type="evidence" value="ECO:0007669"/>
    <property type="project" value="TreeGrafter"/>
</dbReference>
<dbReference type="GO" id="GO:0042597">
    <property type="term" value="C:periplasmic space"/>
    <property type="evidence" value="ECO:0007669"/>
    <property type="project" value="UniProtKB-SubCell"/>
</dbReference>
<dbReference type="GO" id="GO:0051539">
    <property type="term" value="F:4 iron, 4 sulfur cluster binding"/>
    <property type="evidence" value="ECO:0007669"/>
    <property type="project" value="UniProtKB-KW"/>
</dbReference>
<dbReference type="GO" id="GO:0009055">
    <property type="term" value="F:electron transfer activity"/>
    <property type="evidence" value="ECO:0007669"/>
    <property type="project" value="UniProtKB-UniRule"/>
</dbReference>
<dbReference type="GO" id="GO:0005506">
    <property type="term" value="F:iron ion binding"/>
    <property type="evidence" value="ECO:0007669"/>
    <property type="project" value="UniProtKB-UniRule"/>
</dbReference>
<dbReference type="GO" id="GO:0030151">
    <property type="term" value="F:molybdenum ion binding"/>
    <property type="evidence" value="ECO:0007669"/>
    <property type="project" value="InterPro"/>
</dbReference>
<dbReference type="GO" id="GO:0043546">
    <property type="term" value="F:molybdopterin cofactor binding"/>
    <property type="evidence" value="ECO:0007669"/>
    <property type="project" value="InterPro"/>
</dbReference>
<dbReference type="GO" id="GO:0050140">
    <property type="term" value="F:nitrate reductase (cytochrome) activity"/>
    <property type="evidence" value="ECO:0007669"/>
    <property type="project" value="UniProtKB-EC"/>
</dbReference>
<dbReference type="GO" id="GO:0045333">
    <property type="term" value="P:cellular respiration"/>
    <property type="evidence" value="ECO:0007669"/>
    <property type="project" value="UniProtKB-ARBA"/>
</dbReference>
<dbReference type="GO" id="GO:0006777">
    <property type="term" value="P:Mo-molybdopterin cofactor biosynthetic process"/>
    <property type="evidence" value="ECO:0007669"/>
    <property type="project" value="UniProtKB-UniRule"/>
</dbReference>
<dbReference type="GO" id="GO:0042128">
    <property type="term" value="P:nitrate assimilation"/>
    <property type="evidence" value="ECO:0007669"/>
    <property type="project" value="UniProtKB-UniRule"/>
</dbReference>
<dbReference type="CDD" id="cd02791">
    <property type="entry name" value="MopB_CT_Nitrate-R-NapA-like"/>
    <property type="match status" value="1"/>
</dbReference>
<dbReference type="CDD" id="cd02754">
    <property type="entry name" value="MopB_Nitrate-R-NapA-like"/>
    <property type="match status" value="1"/>
</dbReference>
<dbReference type="FunFam" id="2.40.40.20:FF:000005">
    <property type="entry name" value="Periplasmic nitrate reductase"/>
    <property type="match status" value="1"/>
</dbReference>
<dbReference type="Gene3D" id="2.40.40.20">
    <property type="match status" value="1"/>
</dbReference>
<dbReference type="Gene3D" id="3.30.200.210">
    <property type="match status" value="1"/>
</dbReference>
<dbReference type="Gene3D" id="3.40.50.740">
    <property type="match status" value="1"/>
</dbReference>
<dbReference type="Gene3D" id="3.40.228.10">
    <property type="entry name" value="Dimethylsulfoxide Reductase, domain 2"/>
    <property type="match status" value="1"/>
</dbReference>
<dbReference type="HAMAP" id="MF_01630">
    <property type="entry name" value="Nitrate_reduct_NapA"/>
    <property type="match status" value="1"/>
</dbReference>
<dbReference type="InterPro" id="IPR009010">
    <property type="entry name" value="Asp_de-COase-like_dom_sf"/>
</dbReference>
<dbReference type="InterPro" id="IPR041957">
    <property type="entry name" value="CT_Nitrate-R-NapA-like"/>
</dbReference>
<dbReference type="InterPro" id="IPR006657">
    <property type="entry name" value="MoPterin_dinucl-bd_dom"/>
</dbReference>
<dbReference type="InterPro" id="IPR006656">
    <property type="entry name" value="Mopterin_OxRdtase"/>
</dbReference>
<dbReference type="InterPro" id="IPR006963">
    <property type="entry name" value="Mopterin_OxRdtase_4Fe-4S_dom"/>
</dbReference>
<dbReference type="InterPro" id="IPR027467">
    <property type="entry name" value="MopterinOxRdtase_cofactor_BS"/>
</dbReference>
<dbReference type="InterPro" id="IPR010051">
    <property type="entry name" value="Periplasm_NO3_reductase_lsu"/>
</dbReference>
<dbReference type="InterPro" id="IPR050123">
    <property type="entry name" value="Prok_molybdopt-oxidoreductase"/>
</dbReference>
<dbReference type="InterPro" id="IPR006311">
    <property type="entry name" value="TAT_signal"/>
</dbReference>
<dbReference type="InterPro" id="IPR019546">
    <property type="entry name" value="TAT_signal_bac_arc"/>
</dbReference>
<dbReference type="NCBIfam" id="TIGR01706">
    <property type="entry name" value="NAPA"/>
    <property type="match status" value="1"/>
</dbReference>
<dbReference type="NCBIfam" id="NF010055">
    <property type="entry name" value="PRK13532.1"/>
    <property type="match status" value="1"/>
</dbReference>
<dbReference type="NCBIfam" id="TIGR01409">
    <property type="entry name" value="TAT_signal_seq"/>
    <property type="match status" value="1"/>
</dbReference>
<dbReference type="PANTHER" id="PTHR43105:SF11">
    <property type="entry name" value="PERIPLASMIC NITRATE REDUCTASE"/>
    <property type="match status" value="1"/>
</dbReference>
<dbReference type="PANTHER" id="PTHR43105">
    <property type="entry name" value="RESPIRATORY NITRATE REDUCTASE"/>
    <property type="match status" value="1"/>
</dbReference>
<dbReference type="Pfam" id="PF04879">
    <property type="entry name" value="Molybdop_Fe4S4"/>
    <property type="match status" value="1"/>
</dbReference>
<dbReference type="Pfam" id="PF00384">
    <property type="entry name" value="Molybdopterin"/>
    <property type="match status" value="1"/>
</dbReference>
<dbReference type="Pfam" id="PF01568">
    <property type="entry name" value="Molydop_binding"/>
    <property type="match status" value="1"/>
</dbReference>
<dbReference type="Pfam" id="PF10518">
    <property type="entry name" value="TAT_signal"/>
    <property type="match status" value="1"/>
</dbReference>
<dbReference type="SMART" id="SM00926">
    <property type="entry name" value="Molybdop_Fe4S4"/>
    <property type="match status" value="1"/>
</dbReference>
<dbReference type="SUPFAM" id="SSF50692">
    <property type="entry name" value="ADC-like"/>
    <property type="match status" value="1"/>
</dbReference>
<dbReference type="SUPFAM" id="SSF53706">
    <property type="entry name" value="Formate dehydrogenase/DMSO reductase, domains 1-3"/>
    <property type="match status" value="1"/>
</dbReference>
<dbReference type="PROSITE" id="PS51669">
    <property type="entry name" value="4FE4S_MOW_BIS_MGD"/>
    <property type="match status" value="1"/>
</dbReference>
<dbReference type="PROSITE" id="PS00551">
    <property type="entry name" value="MOLYBDOPTERIN_PROK_1"/>
    <property type="match status" value="1"/>
</dbReference>
<dbReference type="PROSITE" id="PS51318">
    <property type="entry name" value="TAT"/>
    <property type="match status" value="1"/>
</dbReference>
<protein>
    <recommendedName>
        <fullName evidence="1">Periplasmic nitrate reductase</fullName>
        <ecNumber evidence="1">1.9.6.1</ecNumber>
    </recommendedName>
</protein>
<gene>
    <name evidence="1" type="primary">napA</name>
    <name type="ordered locus">Asuc_2038</name>
</gene>
<organism>
    <name type="scientific">Actinobacillus succinogenes (strain ATCC 55618 / DSM 22257 / CCUG 43843 / 130Z)</name>
    <dbReference type="NCBI Taxonomy" id="339671"/>
    <lineage>
        <taxon>Bacteria</taxon>
        <taxon>Pseudomonadati</taxon>
        <taxon>Pseudomonadota</taxon>
        <taxon>Gammaproteobacteria</taxon>
        <taxon>Pasteurellales</taxon>
        <taxon>Pasteurellaceae</taxon>
        <taxon>Actinobacillus</taxon>
    </lineage>
</organism>
<proteinExistence type="inferred from homology"/>
<keyword id="KW-0004">4Fe-4S</keyword>
<keyword id="KW-0249">Electron transport</keyword>
<keyword id="KW-0408">Iron</keyword>
<keyword id="KW-0411">Iron-sulfur</keyword>
<keyword id="KW-0479">Metal-binding</keyword>
<keyword id="KW-0500">Molybdenum</keyword>
<keyword id="KW-0534">Nitrate assimilation</keyword>
<keyword id="KW-0560">Oxidoreductase</keyword>
<keyword id="KW-0574">Periplasm</keyword>
<keyword id="KW-1185">Reference proteome</keyword>
<keyword id="KW-0732">Signal</keyword>
<keyword id="KW-0813">Transport</keyword>
<comment type="function">
    <text evidence="1">Catalytic subunit of the periplasmic nitrate reductase complex NapAB. Receives electrons from NapB and catalyzes the reduction of nitrate to nitrite.</text>
</comment>
<comment type="catalytic activity">
    <reaction evidence="1">
        <text>2 Fe(II)-[cytochrome] + nitrate + 2 H(+) = 2 Fe(III)-[cytochrome] + nitrite + H2O</text>
        <dbReference type="Rhea" id="RHEA:12909"/>
        <dbReference type="Rhea" id="RHEA-COMP:11777"/>
        <dbReference type="Rhea" id="RHEA-COMP:11778"/>
        <dbReference type="ChEBI" id="CHEBI:15377"/>
        <dbReference type="ChEBI" id="CHEBI:15378"/>
        <dbReference type="ChEBI" id="CHEBI:16301"/>
        <dbReference type="ChEBI" id="CHEBI:17632"/>
        <dbReference type="ChEBI" id="CHEBI:29033"/>
        <dbReference type="ChEBI" id="CHEBI:29034"/>
        <dbReference type="EC" id="1.9.6.1"/>
    </reaction>
</comment>
<comment type="cofactor">
    <cofactor evidence="1">
        <name>[4Fe-4S] cluster</name>
        <dbReference type="ChEBI" id="CHEBI:49883"/>
    </cofactor>
    <text evidence="1">Binds 1 [4Fe-4S] cluster.</text>
</comment>
<comment type="cofactor">
    <cofactor evidence="1">
        <name>Mo-bis(molybdopterin guanine dinucleotide)</name>
        <dbReference type="ChEBI" id="CHEBI:60539"/>
    </cofactor>
    <text evidence="1">Binds 1 molybdenum-bis(molybdopterin guanine dinucleotide) (Mo-bis-MGD) cofactor per subunit.</text>
</comment>
<comment type="subunit">
    <text evidence="1">Component of the periplasmic nitrate reductase NapAB complex composed of NapA and NapB.</text>
</comment>
<comment type="subcellular location">
    <subcellularLocation>
        <location evidence="1">Periplasm</location>
    </subcellularLocation>
</comment>
<comment type="PTM">
    <text evidence="1">Predicted to be exported by the Tat system. The position of the signal peptide cleavage has not been experimentally proven.</text>
</comment>
<comment type="similarity">
    <text evidence="1">Belongs to the prokaryotic molybdopterin-containing oxidoreductase family. NasA/NapA/NarB subfamily.</text>
</comment>
<accession>A6VQY7</accession>
<evidence type="ECO:0000255" key="1">
    <source>
        <dbReference type="HAMAP-Rule" id="MF_01630"/>
    </source>
</evidence>
<reference key="1">
    <citation type="journal article" date="2010" name="BMC Genomics">
        <title>A genomic perspective on the potential of Actinobacillus succinogenes for industrial succinate production.</title>
        <authorList>
            <person name="McKinlay J.B."/>
            <person name="Laivenieks M."/>
            <person name="Schindler B.D."/>
            <person name="McKinlay A.A."/>
            <person name="Siddaramappa S."/>
            <person name="Challacombe J.F."/>
            <person name="Lowry S.R."/>
            <person name="Clum A."/>
            <person name="Lapidus A.L."/>
            <person name="Burkhart K.B."/>
            <person name="Harkins V."/>
            <person name="Vieille C."/>
        </authorList>
    </citation>
    <scope>NUCLEOTIDE SEQUENCE [LARGE SCALE GENOMIC DNA]</scope>
    <source>
        <strain>ATCC 55618 / DSM 22257 / CCUG 43843 / 130Z</strain>
    </source>
</reference>
<feature type="signal peptide" description="Tat-type signal" evidence="1">
    <location>
        <begin position="1"/>
        <end position="32"/>
    </location>
</feature>
<feature type="chain" id="PRO_5000259017" description="Periplasmic nitrate reductase" evidence="1">
    <location>
        <begin position="33"/>
        <end position="826"/>
    </location>
</feature>
<feature type="domain" description="4Fe-4S Mo/W bis-MGD-type" evidence="1">
    <location>
        <begin position="37"/>
        <end position="93"/>
    </location>
</feature>
<feature type="binding site" evidence="1">
    <location>
        <position position="44"/>
    </location>
    <ligand>
        <name>[4Fe-4S] cluster</name>
        <dbReference type="ChEBI" id="CHEBI:49883"/>
    </ligand>
</feature>
<feature type="binding site" evidence="1">
    <location>
        <position position="47"/>
    </location>
    <ligand>
        <name>[4Fe-4S] cluster</name>
        <dbReference type="ChEBI" id="CHEBI:49883"/>
    </ligand>
</feature>
<feature type="binding site" evidence="1">
    <location>
        <position position="51"/>
    </location>
    <ligand>
        <name>[4Fe-4S] cluster</name>
        <dbReference type="ChEBI" id="CHEBI:49883"/>
    </ligand>
</feature>
<feature type="binding site" evidence="1">
    <location>
        <position position="79"/>
    </location>
    <ligand>
        <name>[4Fe-4S] cluster</name>
        <dbReference type="ChEBI" id="CHEBI:49883"/>
    </ligand>
</feature>
<feature type="binding site" evidence="1">
    <location>
        <position position="81"/>
    </location>
    <ligand>
        <name>Mo-bis(molybdopterin guanine dinucleotide)</name>
        <dbReference type="ChEBI" id="CHEBI:60539"/>
    </ligand>
</feature>
<feature type="binding site" evidence="1">
    <location>
        <position position="148"/>
    </location>
    <ligand>
        <name>Mo-bis(molybdopterin guanine dinucleotide)</name>
        <dbReference type="ChEBI" id="CHEBI:60539"/>
    </ligand>
</feature>
<feature type="binding site" evidence="1">
    <location>
        <position position="173"/>
    </location>
    <ligand>
        <name>Mo-bis(molybdopterin guanine dinucleotide)</name>
        <dbReference type="ChEBI" id="CHEBI:60539"/>
    </ligand>
</feature>
<feature type="binding site" evidence="1">
    <location>
        <position position="177"/>
    </location>
    <ligand>
        <name>Mo-bis(molybdopterin guanine dinucleotide)</name>
        <dbReference type="ChEBI" id="CHEBI:60539"/>
    </ligand>
</feature>
<feature type="binding site" evidence="1">
    <location>
        <begin position="210"/>
        <end position="217"/>
    </location>
    <ligand>
        <name>Mo-bis(molybdopterin guanine dinucleotide)</name>
        <dbReference type="ChEBI" id="CHEBI:60539"/>
    </ligand>
</feature>
<feature type="binding site" evidence="1">
    <location>
        <begin position="241"/>
        <end position="245"/>
    </location>
    <ligand>
        <name>Mo-bis(molybdopterin guanine dinucleotide)</name>
        <dbReference type="ChEBI" id="CHEBI:60539"/>
    </ligand>
</feature>
<feature type="binding site" evidence="1">
    <location>
        <begin position="260"/>
        <end position="262"/>
    </location>
    <ligand>
        <name>Mo-bis(molybdopterin guanine dinucleotide)</name>
        <dbReference type="ChEBI" id="CHEBI:60539"/>
    </ligand>
</feature>
<feature type="binding site" evidence="1">
    <location>
        <position position="370"/>
    </location>
    <ligand>
        <name>Mo-bis(molybdopterin guanine dinucleotide)</name>
        <dbReference type="ChEBI" id="CHEBI:60539"/>
    </ligand>
</feature>
<feature type="binding site" evidence="1">
    <location>
        <position position="374"/>
    </location>
    <ligand>
        <name>Mo-bis(molybdopterin guanine dinucleotide)</name>
        <dbReference type="ChEBI" id="CHEBI:60539"/>
    </ligand>
</feature>
<feature type="binding site" evidence="1">
    <location>
        <position position="480"/>
    </location>
    <ligand>
        <name>Mo-bis(molybdopterin guanine dinucleotide)</name>
        <dbReference type="ChEBI" id="CHEBI:60539"/>
    </ligand>
</feature>
<feature type="binding site" evidence="1">
    <location>
        <begin position="506"/>
        <end position="507"/>
    </location>
    <ligand>
        <name>Mo-bis(molybdopterin guanine dinucleotide)</name>
        <dbReference type="ChEBI" id="CHEBI:60539"/>
    </ligand>
</feature>
<feature type="binding site" evidence="1">
    <location>
        <position position="529"/>
    </location>
    <ligand>
        <name>Mo-bis(molybdopterin guanine dinucleotide)</name>
        <dbReference type="ChEBI" id="CHEBI:60539"/>
    </ligand>
</feature>
<feature type="binding site" evidence="1">
    <location>
        <position position="556"/>
    </location>
    <ligand>
        <name>Mo-bis(molybdopterin guanine dinucleotide)</name>
        <dbReference type="ChEBI" id="CHEBI:60539"/>
    </ligand>
</feature>
<feature type="binding site" evidence="1">
    <location>
        <begin position="716"/>
        <end position="725"/>
    </location>
    <ligand>
        <name>Mo-bis(molybdopterin guanine dinucleotide)</name>
        <dbReference type="ChEBI" id="CHEBI:60539"/>
    </ligand>
</feature>
<feature type="binding site" evidence="1">
    <location>
        <position position="792"/>
    </location>
    <ligand>
        <name>substrate</name>
    </ligand>
</feature>
<feature type="binding site" evidence="1">
    <location>
        <position position="800"/>
    </location>
    <ligand>
        <name>Mo-bis(molybdopterin guanine dinucleotide)</name>
        <dbReference type="ChEBI" id="CHEBI:60539"/>
    </ligand>
</feature>
<feature type="binding site" evidence="1">
    <location>
        <position position="817"/>
    </location>
    <ligand>
        <name>Mo-bis(molybdopterin guanine dinucleotide)</name>
        <dbReference type="ChEBI" id="CHEBI:60539"/>
    </ligand>
</feature>